<feature type="chain" id="PRO_0000051545" description="Mitochondrial import receptor subunit TOM20-3">
    <location>
        <begin position="1"/>
        <end position="202"/>
    </location>
</feature>
<feature type="topological domain" description="Cytoplasmic" evidence="2">
    <location>
        <begin position="1"/>
        <end position="174"/>
    </location>
</feature>
<feature type="transmembrane region" description="Helical" evidence="2">
    <location>
        <begin position="175"/>
        <end position="192"/>
    </location>
</feature>
<feature type="topological domain" description="Mitochondrial intermembrane" evidence="2">
    <location>
        <begin position="193"/>
        <end position="202"/>
    </location>
</feature>
<feature type="repeat" description="TPR 1">
    <location>
        <begin position="38"/>
        <end position="74"/>
    </location>
</feature>
<feature type="repeat" description="TPR 2">
    <location>
        <begin position="86"/>
        <end position="119"/>
    </location>
</feature>
<feature type="region of interest" description="Disordered" evidence="3">
    <location>
        <begin position="146"/>
        <end position="166"/>
    </location>
</feature>
<feature type="modified residue" description="N-acetylmethionine" evidence="11">
    <location>
        <position position="1"/>
    </location>
</feature>
<feature type="sequence conflict" description="In Ref. 5; AAM64598." evidence="8" ref="5">
    <original>L</original>
    <variation>F</variation>
    <location>
        <position position="12"/>
    </location>
</feature>
<feature type="helix" evidence="12">
    <location>
        <begin position="7"/>
        <end position="26"/>
    </location>
</feature>
<feature type="helix" evidence="12">
    <location>
        <begin position="31"/>
        <end position="47"/>
    </location>
</feature>
<feature type="helix" evidence="12">
    <location>
        <begin position="50"/>
        <end position="70"/>
    </location>
</feature>
<feature type="helix" evidence="12">
    <location>
        <begin position="75"/>
        <end position="91"/>
    </location>
</feature>
<feature type="helix" evidence="12">
    <location>
        <begin position="95"/>
        <end position="115"/>
    </location>
</feature>
<feature type="helix" evidence="12">
    <location>
        <begin position="120"/>
        <end position="130"/>
    </location>
</feature>
<feature type="helix" evidence="12">
    <location>
        <begin position="132"/>
        <end position="141"/>
    </location>
</feature>
<feature type="strand" evidence="12">
    <location>
        <begin position="142"/>
        <end position="144"/>
    </location>
</feature>
<organism>
    <name type="scientific">Arabidopsis thaliana</name>
    <name type="common">Mouse-ear cress</name>
    <dbReference type="NCBI Taxonomy" id="3702"/>
    <lineage>
        <taxon>Eukaryota</taxon>
        <taxon>Viridiplantae</taxon>
        <taxon>Streptophyta</taxon>
        <taxon>Embryophyta</taxon>
        <taxon>Tracheophyta</taxon>
        <taxon>Spermatophyta</taxon>
        <taxon>Magnoliopsida</taxon>
        <taxon>eudicotyledons</taxon>
        <taxon>Gunneridae</taxon>
        <taxon>Pentapetalae</taxon>
        <taxon>rosids</taxon>
        <taxon>malvids</taxon>
        <taxon>Brassicales</taxon>
        <taxon>Brassicaceae</taxon>
        <taxon>Camelineae</taxon>
        <taxon>Arabidopsis</taxon>
    </lineage>
</organism>
<evidence type="ECO:0000250" key="1">
    <source>
        <dbReference type="UniProtKB" id="P82873"/>
    </source>
</evidence>
<evidence type="ECO:0000255" key="2"/>
<evidence type="ECO:0000256" key="3">
    <source>
        <dbReference type="SAM" id="MobiDB-lite"/>
    </source>
</evidence>
<evidence type="ECO:0000269" key="4">
    <source>
    </source>
</evidence>
<evidence type="ECO:0000269" key="5">
    <source>
    </source>
</evidence>
<evidence type="ECO:0000269" key="6">
    <source ref="6"/>
</evidence>
<evidence type="ECO:0000303" key="7">
    <source>
    </source>
</evidence>
<evidence type="ECO:0000305" key="8"/>
<evidence type="ECO:0000312" key="9">
    <source>
        <dbReference type="Araport" id="AT3G27080"/>
    </source>
</evidence>
<evidence type="ECO:0000312" key="10">
    <source>
        <dbReference type="EMBL" id="BAB01089.1"/>
    </source>
</evidence>
<evidence type="ECO:0007744" key="11">
    <source>
    </source>
</evidence>
<evidence type="ECO:0007829" key="12">
    <source>
        <dbReference type="PDB" id="1ZU2"/>
    </source>
</evidence>
<sequence length="202" mass="22565">MDTETEFDRILLFEQIRQDAENTYKSNPLDADNLTRWGGVLLELSQFHSISDAKQMIQEAITKFEEALLIDPKKDEAVWCIGNAYTSFAFLTPDETEAKHNFDLATQFFQQAVDEQPDNTHYLKSLEMTAKAPQLHAEAYKQGLGSQPMGRVEAPAPPSSKAVKNKKSSDAKYDAMGWVILAIGVVAWISFAKANVPVSPPR</sequence>
<accession>P82874</accession>
<accession>Q8LBR8</accession>
<accession>Q9LSC8</accession>
<comment type="function">
    <text evidence="5">Central component of the receptor complex responsible for the recognition and translocation of cytosolically synthesized mitochondrial preproteins. Together with TOM22 functions as the transit peptide receptor at the surface of the mitochondrion outer membrane and facilitates the movement of preproteins into the translocation pore.</text>
</comment>
<comment type="subunit">
    <text evidence="1 5 6">Forms part of the preprotein translocase complex of the outer mitochondrial membrane (TOM complex) which consists of at least 6 different proteins (TOM5, TOM6, TOM7, TOM20, TOM22/TOM9 and TOM40) (PubMed:17981999, Ref.6). Component of a mitochondrial large protein complex that contains, at least, MIC60, DGS1, TOM40, TOM20 proteins, and petC/RISP (By similarity).</text>
</comment>
<comment type="interaction">
    <interactant intactId="EBI-2352074">
        <id>P82874</id>
    </interactant>
    <interactant intactId="EBI-2319707">
        <id>Q94F58</id>
        <label>NAC089</label>
    </interactant>
    <organismsDiffer>false</organismsDiffer>
    <experiments>2</experiments>
</comment>
<comment type="subcellular location">
    <subcellularLocation>
        <location evidence="8">Mitochondrion outer membrane</location>
        <topology evidence="8">Single-pass membrane protein</topology>
    </subcellularLocation>
</comment>
<comment type="tissue specificity">
    <text evidence="4">Expressed in roots, flowers, young cotyledons and leaves.</text>
</comment>
<comment type="PTM">
    <text>The N-terminus is blocked.</text>
</comment>
<comment type="disruption phenotype">
    <text evidence="5">No visible phenotype. Triple mutants tom20-2-tom20-3-tom20-4 are vible but display a slightly delayed flowering time.</text>
</comment>
<comment type="miscellaneous">
    <text>There are four genes (TOM20-1, TOM20-2, TOM20-3 and TOM20-4) which encode mitochondrial import receptor subunits TOM20.</text>
</comment>
<comment type="miscellaneous">
    <text>In mammals and fungi, the transmembrane domain is located at the N-terminus while it is located at the C-terminus in plants. The overall orientation of the protein in the membrane is therefore inverted.</text>
</comment>
<comment type="similarity">
    <text evidence="8">Belongs to the Tom20 family.</text>
</comment>
<gene>
    <name evidence="7" type="primary">TOM20-3</name>
    <name evidence="9" type="ordered locus">At3g27080</name>
    <name evidence="10" type="ORF">MOJ10.15</name>
</gene>
<dbReference type="EMBL" id="AJ296025">
    <property type="protein sequence ID" value="CAC14430.1"/>
    <property type="molecule type" value="mRNA"/>
</dbReference>
<dbReference type="EMBL" id="AB026649">
    <property type="protein sequence ID" value="BAB01089.1"/>
    <property type="molecule type" value="Genomic_DNA"/>
</dbReference>
<dbReference type="EMBL" id="CP002686">
    <property type="protein sequence ID" value="AEE77264.1"/>
    <property type="molecule type" value="Genomic_DNA"/>
</dbReference>
<dbReference type="EMBL" id="AY040027">
    <property type="protein sequence ID" value="AAK64184.1"/>
    <property type="molecule type" value="mRNA"/>
</dbReference>
<dbReference type="EMBL" id="AY079411">
    <property type="protein sequence ID" value="AAL85142.1"/>
    <property type="molecule type" value="mRNA"/>
</dbReference>
<dbReference type="EMBL" id="AY087037">
    <property type="protein sequence ID" value="AAM64598.1"/>
    <property type="molecule type" value="mRNA"/>
</dbReference>
<dbReference type="RefSeq" id="NP_189344.1">
    <property type="nucleotide sequence ID" value="NM_113622.4"/>
</dbReference>
<dbReference type="PDB" id="1ZU2">
    <property type="method" value="NMR"/>
    <property type="chains" value="A=1-145"/>
</dbReference>
<dbReference type="PDBsum" id="1ZU2"/>
<dbReference type="BMRB" id="P82874"/>
<dbReference type="SMR" id="P82874"/>
<dbReference type="BioGRID" id="7656">
    <property type="interactions" value="16"/>
</dbReference>
<dbReference type="FunCoup" id="P82874">
    <property type="interactions" value="1001"/>
</dbReference>
<dbReference type="IntAct" id="P82874">
    <property type="interactions" value="15"/>
</dbReference>
<dbReference type="STRING" id="3702.P82874"/>
<dbReference type="iPTMnet" id="P82874"/>
<dbReference type="SwissPalm" id="P82874"/>
<dbReference type="PaxDb" id="3702-AT3G27080.1"/>
<dbReference type="ProteomicsDB" id="234377"/>
<dbReference type="EnsemblPlants" id="AT3G27080.1">
    <property type="protein sequence ID" value="AT3G27080.1"/>
    <property type="gene ID" value="AT3G27080"/>
</dbReference>
<dbReference type="GeneID" id="822326"/>
<dbReference type="Gramene" id="AT3G27080.1">
    <property type="protein sequence ID" value="AT3G27080.1"/>
    <property type="gene ID" value="AT3G27080"/>
</dbReference>
<dbReference type="KEGG" id="ath:AT3G27080"/>
<dbReference type="Araport" id="AT3G27080"/>
<dbReference type="TAIR" id="AT3G27080">
    <property type="gene designation" value="TOM20-3"/>
</dbReference>
<dbReference type="eggNOG" id="ENOG502QT42">
    <property type="taxonomic scope" value="Eukaryota"/>
</dbReference>
<dbReference type="HOGENOM" id="CLU_117357_0_0_1"/>
<dbReference type="InParanoid" id="P82874"/>
<dbReference type="OMA" id="KAPQLHA"/>
<dbReference type="OrthoDB" id="1056333at2759"/>
<dbReference type="PhylomeDB" id="P82874"/>
<dbReference type="EvolutionaryTrace" id="P82874"/>
<dbReference type="PRO" id="PR:P82874"/>
<dbReference type="Proteomes" id="UP000006548">
    <property type="component" value="Chromosome 3"/>
</dbReference>
<dbReference type="ExpressionAtlas" id="P82874">
    <property type="expression patterns" value="baseline and differential"/>
</dbReference>
<dbReference type="GO" id="GO:0005829">
    <property type="term" value="C:cytosol"/>
    <property type="evidence" value="ECO:0007005"/>
    <property type="project" value="TAIR"/>
</dbReference>
<dbReference type="GO" id="GO:0005743">
    <property type="term" value="C:mitochondrial inner membrane"/>
    <property type="evidence" value="ECO:0007005"/>
    <property type="project" value="TAIR"/>
</dbReference>
<dbReference type="GO" id="GO:0005741">
    <property type="term" value="C:mitochondrial outer membrane"/>
    <property type="evidence" value="ECO:0007005"/>
    <property type="project" value="TAIR"/>
</dbReference>
<dbReference type="GO" id="GO:0005742">
    <property type="term" value="C:mitochondrial outer membrane translocase complex"/>
    <property type="evidence" value="ECO:0000314"/>
    <property type="project" value="TAIR"/>
</dbReference>
<dbReference type="GO" id="GO:0005739">
    <property type="term" value="C:mitochondrion"/>
    <property type="evidence" value="ECO:0007005"/>
    <property type="project" value="TAIR"/>
</dbReference>
<dbReference type="GO" id="GO:0005744">
    <property type="term" value="C:TIM23 mitochondrial import inner membrane translocase complex"/>
    <property type="evidence" value="ECO:0000304"/>
    <property type="project" value="TAIR"/>
</dbReference>
<dbReference type="GO" id="GO:0015450">
    <property type="term" value="F:protein-transporting ATPase activity"/>
    <property type="evidence" value="ECO:0000314"/>
    <property type="project" value="TAIR"/>
</dbReference>
<dbReference type="GO" id="GO:0045040">
    <property type="term" value="P:protein insertion into mitochondrial outer membrane"/>
    <property type="evidence" value="ECO:0007669"/>
    <property type="project" value="InterPro"/>
</dbReference>
<dbReference type="GO" id="GO:0006626">
    <property type="term" value="P:protein targeting to mitochondrion"/>
    <property type="evidence" value="ECO:0000315"/>
    <property type="project" value="TAIR"/>
</dbReference>
<dbReference type="FunFam" id="1.25.40.10:FF:001599">
    <property type="entry name" value="Mitochondrial import receptor subunit TOM20-3"/>
    <property type="match status" value="1"/>
</dbReference>
<dbReference type="Gene3D" id="1.25.40.10">
    <property type="entry name" value="Tetratricopeptide repeat domain"/>
    <property type="match status" value="1"/>
</dbReference>
<dbReference type="InterPro" id="IPR010547">
    <property type="entry name" value="TOM20_imprt_rcpt"/>
</dbReference>
<dbReference type="InterPro" id="IPR011990">
    <property type="entry name" value="TPR-like_helical_dom_sf"/>
</dbReference>
<dbReference type="PANTHER" id="PTHR32409">
    <property type="entry name" value="MITOCHONDRIAL IMPORT RECEPTOR SUBUNIT TOM20-1-RELATED"/>
    <property type="match status" value="1"/>
</dbReference>
<dbReference type="PANTHER" id="PTHR32409:SF3">
    <property type="entry name" value="MITOCHONDRIAL IMPORT RECEPTOR SUBUNIT TOM20-1-RELATED"/>
    <property type="match status" value="1"/>
</dbReference>
<dbReference type="Pfam" id="PF06552">
    <property type="entry name" value="TOM20_plant"/>
    <property type="match status" value="1"/>
</dbReference>
<dbReference type="SUPFAM" id="SSF48452">
    <property type="entry name" value="TPR-like"/>
    <property type="match status" value="1"/>
</dbReference>
<keyword id="KW-0002">3D-structure</keyword>
<keyword id="KW-0007">Acetylation</keyword>
<keyword id="KW-0903">Direct protein sequencing</keyword>
<keyword id="KW-0472">Membrane</keyword>
<keyword id="KW-0496">Mitochondrion</keyword>
<keyword id="KW-1000">Mitochondrion outer membrane</keyword>
<keyword id="KW-0653">Protein transport</keyword>
<keyword id="KW-1185">Reference proteome</keyword>
<keyword id="KW-0677">Repeat</keyword>
<keyword id="KW-0802">TPR repeat</keyword>
<keyword id="KW-0812">Transmembrane</keyword>
<keyword id="KW-1133">Transmembrane helix</keyword>
<keyword id="KW-0813">Transport</keyword>
<name>TO203_ARATH</name>
<proteinExistence type="evidence at protein level"/>
<reference key="1">
    <citation type="journal article" date="2001" name="Plant Physiol.">
        <title>Purification and characterization of the preprotein translocase of the outer mitochondrial membrane from Arabidopsis. Identification of multiple forms of TOM20.</title>
        <authorList>
            <person name="Werhahn W."/>
            <person name="Niemeyer A."/>
            <person name="Jaensch L."/>
            <person name="Kruft V."/>
            <person name="Schmitz U.K."/>
            <person name="Braun H.-P."/>
        </authorList>
    </citation>
    <scope>NUCLEOTIDE SEQUENCE [MRNA]</scope>
    <scope>PROTEIN SEQUENCE OF 99-123</scope>
    <source>
        <strain>cv. Columbia</strain>
    </source>
</reference>
<reference key="2">
    <citation type="journal article" date="2000" name="DNA Res.">
        <title>Structural analysis of Arabidopsis thaliana chromosome 3. I. Sequence features of the regions of 4,504,864 bp covered by sixty P1 and TAC clones.</title>
        <authorList>
            <person name="Sato S."/>
            <person name="Nakamura Y."/>
            <person name="Kaneko T."/>
            <person name="Katoh T."/>
            <person name="Asamizu E."/>
            <person name="Tabata S."/>
        </authorList>
    </citation>
    <scope>NUCLEOTIDE SEQUENCE [LARGE SCALE GENOMIC DNA]</scope>
    <source>
        <strain>cv. Columbia</strain>
    </source>
</reference>
<reference key="3">
    <citation type="journal article" date="2017" name="Plant J.">
        <title>Araport11: a complete reannotation of the Arabidopsis thaliana reference genome.</title>
        <authorList>
            <person name="Cheng C.Y."/>
            <person name="Krishnakumar V."/>
            <person name="Chan A.P."/>
            <person name="Thibaud-Nissen F."/>
            <person name="Schobel S."/>
            <person name="Town C.D."/>
        </authorList>
    </citation>
    <scope>GENOME REANNOTATION</scope>
    <source>
        <strain>cv. Columbia</strain>
    </source>
</reference>
<reference key="4">
    <citation type="journal article" date="2003" name="Science">
        <title>Empirical analysis of transcriptional activity in the Arabidopsis genome.</title>
        <authorList>
            <person name="Yamada K."/>
            <person name="Lim J."/>
            <person name="Dale J.M."/>
            <person name="Chen H."/>
            <person name="Shinn P."/>
            <person name="Palm C.J."/>
            <person name="Southwick A.M."/>
            <person name="Wu H.C."/>
            <person name="Kim C.J."/>
            <person name="Nguyen M."/>
            <person name="Pham P.K."/>
            <person name="Cheuk R.F."/>
            <person name="Karlin-Newmann G."/>
            <person name="Liu S.X."/>
            <person name="Lam B."/>
            <person name="Sakano H."/>
            <person name="Wu T."/>
            <person name="Yu G."/>
            <person name="Miranda M."/>
            <person name="Quach H.L."/>
            <person name="Tripp M."/>
            <person name="Chang C.H."/>
            <person name="Lee J.M."/>
            <person name="Toriumi M.J."/>
            <person name="Chan M.M."/>
            <person name="Tang C.C."/>
            <person name="Onodera C.S."/>
            <person name="Deng J.M."/>
            <person name="Akiyama K."/>
            <person name="Ansari Y."/>
            <person name="Arakawa T."/>
            <person name="Banh J."/>
            <person name="Banno F."/>
            <person name="Bowser L."/>
            <person name="Brooks S.Y."/>
            <person name="Carninci P."/>
            <person name="Chao Q."/>
            <person name="Choy N."/>
            <person name="Enju A."/>
            <person name="Goldsmith A.D."/>
            <person name="Gurjal M."/>
            <person name="Hansen N.F."/>
            <person name="Hayashizaki Y."/>
            <person name="Johnson-Hopson C."/>
            <person name="Hsuan V.W."/>
            <person name="Iida K."/>
            <person name="Karnes M."/>
            <person name="Khan S."/>
            <person name="Koesema E."/>
            <person name="Ishida J."/>
            <person name="Jiang P.X."/>
            <person name="Jones T."/>
            <person name="Kawai J."/>
            <person name="Kamiya A."/>
            <person name="Meyers C."/>
            <person name="Nakajima M."/>
            <person name="Narusaka M."/>
            <person name="Seki M."/>
            <person name="Sakurai T."/>
            <person name="Satou M."/>
            <person name="Tamse R."/>
            <person name="Vaysberg M."/>
            <person name="Wallender E.K."/>
            <person name="Wong C."/>
            <person name="Yamamura Y."/>
            <person name="Yuan S."/>
            <person name="Shinozaki K."/>
            <person name="Davis R.W."/>
            <person name="Theologis A."/>
            <person name="Ecker J.R."/>
        </authorList>
    </citation>
    <scope>NUCLEOTIDE SEQUENCE [LARGE SCALE MRNA]</scope>
    <source>
        <strain>cv. Columbia</strain>
    </source>
</reference>
<reference key="5">
    <citation type="submission" date="2002-03" db="EMBL/GenBank/DDBJ databases">
        <title>Full-length cDNA from Arabidopsis thaliana.</title>
        <authorList>
            <person name="Brover V.V."/>
            <person name="Troukhan M.E."/>
            <person name="Alexandrov N.A."/>
            <person name="Lu Y.-P."/>
            <person name="Flavell R.B."/>
            <person name="Feldmann K.A."/>
        </authorList>
    </citation>
    <scope>NUCLEOTIDE SEQUENCE [LARGE SCALE MRNA]</scope>
</reference>
<reference key="6">
    <citation type="journal article" date="2003" name="Plant Physiol. Biochem.">
        <title>Identification of novel subunits of the TOM complex from Arabidopsis thaliana.</title>
        <authorList>
            <person name="Werhahn W."/>
            <person name="Jaensch L."/>
            <person name="Braun H.-P."/>
        </authorList>
    </citation>
    <scope>PROTEIN SEQUENCE OF 4-5</scope>
    <scope>SUBUNIT</scope>
</reference>
<reference key="7">
    <citation type="journal article" date="2004" name="Plant Physiol.">
        <title>A transcriptomic and proteomic characterization of the Arabidopsis mitochondrial protein import apparatus and its response to mitochondrial dysfunction.</title>
        <authorList>
            <person name="Lister R."/>
            <person name="Chew O."/>
            <person name="Lee M.N."/>
            <person name="Heazlewood J.L."/>
            <person name="Clifton R."/>
            <person name="Parker K.L."/>
            <person name="Millar A.H."/>
            <person name="Whelan J."/>
        </authorList>
    </citation>
    <scope>TISSUE SPECIFICITY</scope>
    <scope>SUBCELLULAR LOCATION</scope>
    <scope>IDENTIFICATION BY MASS SPECTROMETRY</scope>
</reference>
<reference key="8">
    <citation type="journal article" date="2007" name="Plant Cell">
        <title>Functional definition of outer membrane proteins involved in preprotein import into mitochondria.</title>
        <authorList>
            <person name="Lister R."/>
            <person name="Carrie C."/>
            <person name="Duncan O."/>
            <person name="Ho L.H."/>
            <person name="Howell K.A."/>
            <person name="Murcha M.W."/>
            <person name="Whelan J."/>
        </authorList>
    </citation>
    <scope>FUNCTION</scope>
    <scope>DISRUPTION PHENOTYPE</scope>
    <scope>SUBUNIT</scope>
</reference>
<reference key="9">
    <citation type="journal article" date="2012" name="Mol. Cell. Proteomics">
        <title>Comparative large-scale characterisation of plant vs. mammal proteins reveals similar and idiosyncratic N-alpha acetylation features.</title>
        <authorList>
            <person name="Bienvenut W.V."/>
            <person name="Sumpton D."/>
            <person name="Martinez A."/>
            <person name="Lilla S."/>
            <person name="Espagne C."/>
            <person name="Meinnel T."/>
            <person name="Giglione C."/>
        </authorList>
    </citation>
    <scope>ACETYLATION [LARGE SCALE ANALYSIS] AT MET-1</scope>
    <scope>IDENTIFICATION BY MASS SPECTROMETRY [LARGE SCALE ANALYSIS]</scope>
</reference>
<reference key="10">
    <citation type="journal article" date="2006" name="Curr. Biol.">
        <title>Convergent evolution of receptors for protein import into mitochondria.</title>
        <authorList>
            <person name="Perry A.J."/>
            <person name="Hulett J.M."/>
            <person name="Likic V.A."/>
            <person name="Lithgow T."/>
            <person name="Gooley P.R."/>
        </authorList>
    </citation>
    <scope>STRUCTURE BY NMR OF 1-145</scope>
</reference>
<protein>
    <recommendedName>
        <fullName evidence="7">Mitochondrial import receptor subunit TOM20-3</fullName>
    </recommendedName>
    <alternativeName>
        <fullName evidence="7">Translocase of outer membrane 20 kDa subunit 3</fullName>
    </alternativeName>
</protein>